<dbReference type="EMBL" id="AM167904">
    <property type="protein sequence ID" value="CAJ50622.1"/>
    <property type="molecule type" value="Genomic_DNA"/>
</dbReference>
<dbReference type="RefSeq" id="WP_012418651.1">
    <property type="nucleotide sequence ID" value="NC_010645.1"/>
</dbReference>
<dbReference type="SMR" id="Q2KUT1"/>
<dbReference type="STRING" id="360910.BAV3012"/>
<dbReference type="KEGG" id="bav:BAV3012"/>
<dbReference type="eggNOG" id="COG1678">
    <property type="taxonomic scope" value="Bacteria"/>
</dbReference>
<dbReference type="HOGENOM" id="CLU_057596_1_0_4"/>
<dbReference type="OrthoDB" id="9807486at2"/>
<dbReference type="Proteomes" id="UP000001977">
    <property type="component" value="Chromosome"/>
</dbReference>
<dbReference type="GO" id="GO:0005829">
    <property type="term" value="C:cytosol"/>
    <property type="evidence" value="ECO:0007669"/>
    <property type="project" value="TreeGrafter"/>
</dbReference>
<dbReference type="Gene3D" id="3.40.1740.10">
    <property type="entry name" value="VC0467-like"/>
    <property type="match status" value="1"/>
</dbReference>
<dbReference type="HAMAP" id="MF_00758">
    <property type="entry name" value="UPF0301"/>
    <property type="match status" value="1"/>
</dbReference>
<dbReference type="InterPro" id="IPR003774">
    <property type="entry name" value="AlgH-like"/>
</dbReference>
<dbReference type="NCBIfam" id="NF001266">
    <property type="entry name" value="PRK00228.1-1"/>
    <property type="match status" value="1"/>
</dbReference>
<dbReference type="NCBIfam" id="NF001267">
    <property type="entry name" value="PRK00228.1-2"/>
    <property type="match status" value="1"/>
</dbReference>
<dbReference type="PANTHER" id="PTHR30327">
    <property type="entry name" value="UNCHARACTERIZED PROTEIN YQGE"/>
    <property type="match status" value="1"/>
</dbReference>
<dbReference type="PANTHER" id="PTHR30327:SF1">
    <property type="entry name" value="UPF0301 PROTEIN YQGE"/>
    <property type="match status" value="1"/>
</dbReference>
<dbReference type="Pfam" id="PF02622">
    <property type="entry name" value="DUF179"/>
    <property type="match status" value="1"/>
</dbReference>
<dbReference type="SUPFAM" id="SSF143456">
    <property type="entry name" value="VC0467-like"/>
    <property type="match status" value="1"/>
</dbReference>
<name>Y3012_BORA1</name>
<comment type="similarity">
    <text evidence="1">Belongs to the UPF0301 (AlgH) family.</text>
</comment>
<accession>Q2KUT1</accession>
<evidence type="ECO:0000255" key="1">
    <source>
        <dbReference type="HAMAP-Rule" id="MF_00758"/>
    </source>
</evidence>
<proteinExistence type="inferred from homology"/>
<organism>
    <name type="scientific">Bordetella avium (strain 197N)</name>
    <dbReference type="NCBI Taxonomy" id="360910"/>
    <lineage>
        <taxon>Bacteria</taxon>
        <taxon>Pseudomonadati</taxon>
        <taxon>Pseudomonadota</taxon>
        <taxon>Betaproteobacteria</taxon>
        <taxon>Burkholderiales</taxon>
        <taxon>Alcaligenaceae</taxon>
        <taxon>Bordetella</taxon>
    </lineage>
</organism>
<reference key="1">
    <citation type="journal article" date="2006" name="J. Bacteriol.">
        <title>Comparison of the genome sequence of the poultry pathogen Bordetella avium with those of B. bronchiseptica, B. pertussis, and B. parapertussis reveals extensive diversity in surface structures associated with host interaction.</title>
        <authorList>
            <person name="Sebaihia M."/>
            <person name="Preston A."/>
            <person name="Maskell D.J."/>
            <person name="Kuzmiak H."/>
            <person name="Connell T.D."/>
            <person name="King N.D."/>
            <person name="Orndorff P.E."/>
            <person name="Miyamoto D.M."/>
            <person name="Thomson N.R."/>
            <person name="Harris D."/>
            <person name="Goble A."/>
            <person name="Lord A."/>
            <person name="Murphy L."/>
            <person name="Quail M.A."/>
            <person name="Rutter S."/>
            <person name="Squares R."/>
            <person name="Squares S."/>
            <person name="Woodward J."/>
            <person name="Parkhill J."/>
            <person name="Temple L.M."/>
        </authorList>
    </citation>
    <scope>NUCLEOTIDE SEQUENCE [LARGE SCALE GENOMIC DNA]</scope>
    <source>
        <strain>197N</strain>
    </source>
</reference>
<feature type="chain" id="PRO_0000258803" description="UPF0301 protein BAV3012">
    <location>
        <begin position="1"/>
        <end position="197"/>
    </location>
</feature>
<keyword id="KW-1185">Reference proteome</keyword>
<gene>
    <name type="ordered locus">BAV3012</name>
</gene>
<sequence length="197" mass="20979">MTAIFRSASADDARFTDFSNQFLMAMPGMVNDELAGTVIYICEHTPRGALGLVLNRPTDLTLASLFERIDLTVAMGPTADEKVFFGGPVQTDRGFVLHAPAGDYSSSIRLGDLALTTSRDVLQAVAEGQGPARLFVTLGYAGWGAGQLESEMSQNAWLSVAADPVIIFDVPAEERYPAAMRLLGIDPLMLAGEAGHA</sequence>
<protein>
    <recommendedName>
        <fullName evidence="1">UPF0301 protein BAV3012</fullName>
    </recommendedName>
</protein>